<keyword id="KW-1185">Reference proteome</keyword>
<keyword id="KW-0687">Ribonucleoprotein</keyword>
<keyword id="KW-0689">Ribosomal protein</keyword>
<keyword id="KW-0694">RNA-binding</keyword>
<keyword id="KW-0699">rRNA-binding</keyword>
<protein>
    <recommendedName>
        <fullName evidence="1">Large ribosomal subunit protein bL21</fullName>
    </recommendedName>
    <alternativeName>
        <fullName evidence="2">50S ribosomal protein L21</fullName>
    </alternativeName>
</protein>
<evidence type="ECO:0000255" key="1">
    <source>
        <dbReference type="HAMAP-Rule" id="MF_01363"/>
    </source>
</evidence>
<evidence type="ECO:0000305" key="2"/>
<feature type="chain" id="PRO_1000214885" description="Large ribosomal subunit protein bL21">
    <location>
        <begin position="1"/>
        <end position="103"/>
    </location>
</feature>
<organism>
    <name type="scientific">Maridesulfovibrio salexigens (strain ATCC 14822 / DSM 2638 / NCIMB 8403 / VKM B-1763)</name>
    <name type="common">Desulfovibrio salexigens</name>
    <dbReference type="NCBI Taxonomy" id="526222"/>
    <lineage>
        <taxon>Bacteria</taxon>
        <taxon>Pseudomonadati</taxon>
        <taxon>Thermodesulfobacteriota</taxon>
        <taxon>Desulfovibrionia</taxon>
        <taxon>Desulfovibrionales</taxon>
        <taxon>Desulfovibrionaceae</taxon>
        <taxon>Maridesulfovibrio</taxon>
    </lineage>
</organism>
<accession>C6BZ96</accession>
<dbReference type="EMBL" id="CP001649">
    <property type="protein sequence ID" value="ACS78920.1"/>
    <property type="molecule type" value="Genomic_DNA"/>
</dbReference>
<dbReference type="RefSeq" id="WP_015850739.1">
    <property type="nucleotide sequence ID" value="NC_012881.1"/>
</dbReference>
<dbReference type="SMR" id="C6BZ96"/>
<dbReference type="STRING" id="526222.Desal_0854"/>
<dbReference type="KEGG" id="dsa:Desal_0854"/>
<dbReference type="eggNOG" id="COG0261">
    <property type="taxonomic scope" value="Bacteria"/>
</dbReference>
<dbReference type="HOGENOM" id="CLU_061463_3_2_7"/>
<dbReference type="OrthoDB" id="9813334at2"/>
<dbReference type="Proteomes" id="UP000002601">
    <property type="component" value="Chromosome"/>
</dbReference>
<dbReference type="GO" id="GO:0005737">
    <property type="term" value="C:cytoplasm"/>
    <property type="evidence" value="ECO:0007669"/>
    <property type="project" value="UniProtKB-ARBA"/>
</dbReference>
<dbReference type="GO" id="GO:1990904">
    <property type="term" value="C:ribonucleoprotein complex"/>
    <property type="evidence" value="ECO:0007669"/>
    <property type="project" value="UniProtKB-KW"/>
</dbReference>
<dbReference type="GO" id="GO:0005840">
    <property type="term" value="C:ribosome"/>
    <property type="evidence" value="ECO:0007669"/>
    <property type="project" value="UniProtKB-KW"/>
</dbReference>
<dbReference type="GO" id="GO:0019843">
    <property type="term" value="F:rRNA binding"/>
    <property type="evidence" value="ECO:0007669"/>
    <property type="project" value="UniProtKB-UniRule"/>
</dbReference>
<dbReference type="GO" id="GO:0003735">
    <property type="term" value="F:structural constituent of ribosome"/>
    <property type="evidence" value="ECO:0007669"/>
    <property type="project" value="InterPro"/>
</dbReference>
<dbReference type="GO" id="GO:0006412">
    <property type="term" value="P:translation"/>
    <property type="evidence" value="ECO:0007669"/>
    <property type="project" value="UniProtKB-UniRule"/>
</dbReference>
<dbReference type="HAMAP" id="MF_01363">
    <property type="entry name" value="Ribosomal_bL21"/>
    <property type="match status" value="1"/>
</dbReference>
<dbReference type="InterPro" id="IPR028909">
    <property type="entry name" value="bL21-like"/>
</dbReference>
<dbReference type="InterPro" id="IPR036164">
    <property type="entry name" value="bL21-like_sf"/>
</dbReference>
<dbReference type="InterPro" id="IPR001787">
    <property type="entry name" value="Ribosomal_bL21"/>
</dbReference>
<dbReference type="InterPro" id="IPR018258">
    <property type="entry name" value="Ribosomal_bL21_CS"/>
</dbReference>
<dbReference type="NCBIfam" id="TIGR00061">
    <property type="entry name" value="L21"/>
    <property type="match status" value="1"/>
</dbReference>
<dbReference type="PANTHER" id="PTHR21349">
    <property type="entry name" value="50S RIBOSOMAL PROTEIN L21"/>
    <property type="match status" value="1"/>
</dbReference>
<dbReference type="PANTHER" id="PTHR21349:SF0">
    <property type="entry name" value="LARGE RIBOSOMAL SUBUNIT PROTEIN BL21M"/>
    <property type="match status" value="1"/>
</dbReference>
<dbReference type="Pfam" id="PF00829">
    <property type="entry name" value="Ribosomal_L21p"/>
    <property type="match status" value="1"/>
</dbReference>
<dbReference type="SUPFAM" id="SSF141091">
    <property type="entry name" value="L21p-like"/>
    <property type="match status" value="1"/>
</dbReference>
<dbReference type="PROSITE" id="PS01169">
    <property type="entry name" value="RIBOSOMAL_L21"/>
    <property type="match status" value="1"/>
</dbReference>
<reference key="1">
    <citation type="submission" date="2009-06" db="EMBL/GenBank/DDBJ databases">
        <title>Complete sequence of Desulfovibrio salexigens DSM 2638.</title>
        <authorList>
            <consortium name="US DOE Joint Genome Institute"/>
            <person name="Lucas S."/>
            <person name="Copeland A."/>
            <person name="Lapidus A."/>
            <person name="Glavina del Rio T."/>
            <person name="Tice H."/>
            <person name="Bruce D."/>
            <person name="Goodwin L."/>
            <person name="Pitluck S."/>
            <person name="Munk A.C."/>
            <person name="Brettin T."/>
            <person name="Detter J.C."/>
            <person name="Han C."/>
            <person name="Tapia R."/>
            <person name="Larimer F."/>
            <person name="Land M."/>
            <person name="Hauser L."/>
            <person name="Kyrpides N."/>
            <person name="Anderson I."/>
            <person name="Wall J.D."/>
            <person name="Arkin A.P."/>
            <person name="Dehal P."/>
            <person name="Chivian D."/>
            <person name="Giles B."/>
            <person name="Hazen T.C."/>
        </authorList>
    </citation>
    <scope>NUCLEOTIDE SEQUENCE [LARGE SCALE GENOMIC DNA]</scope>
    <source>
        <strain>ATCC 14822 / DSM 2638 / NCIMB 8403 / VKM B-1763</strain>
    </source>
</reference>
<gene>
    <name evidence="1" type="primary">rplU</name>
    <name type="ordered locus">Desal_0854</name>
</gene>
<comment type="function">
    <text evidence="1">This protein binds to 23S rRNA in the presence of protein L20.</text>
</comment>
<comment type="subunit">
    <text evidence="1">Part of the 50S ribosomal subunit. Contacts protein L20.</text>
</comment>
<comment type="similarity">
    <text evidence="1">Belongs to the bacterial ribosomal protein bL21 family.</text>
</comment>
<name>RL21_MARSD</name>
<sequence>MYAIIETGGKQFRVEEGLELNVQKMDAEAGTKVDLDKILLIGQGEDVKIGAPYVEGAKVSCTVVEHGRDKKIVVFKKRRRKDSQTKQGHRQDYTRIKVEAIQA</sequence>
<proteinExistence type="inferred from homology"/>